<feature type="chain" id="PRO_1000003127" description="Ribosome-recycling factor">
    <location>
        <begin position="1"/>
        <end position="186"/>
    </location>
</feature>
<dbReference type="EMBL" id="CP000270">
    <property type="protein sequence ID" value="ABE31270.1"/>
    <property type="molecule type" value="Genomic_DNA"/>
</dbReference>
<dbReference type="RefSeq" id="WP_007181435.1">
    <property type="nucleotide sequence ID" value="NZ_CP008760.1"/>
</dbReference>
<dbReference type="SMR" id="Q13XB9"/>
<dbReference type="STRING" id="266265.Bxe_A1685"/>
<dbReference type="KEGG" id="bxb:DR64_3850"/>
<dbReference type="KEGG" id="bxe:Bxe_A1685"/>
<dbReference type="eggNOG" id="COG0233">
    <property type="taxonomic scope" value="Bacteria"/>
</dbReference>
<dbReference type="OrthoDB" id="9804006at2"/>
<dbReference type="Proteomes" id="UP000001817">
    <property type="component" value="Chromosome 1"/>
</dbReference>
<dbReference type="GO" id="GO:0005829">
    <property type="term" value="C:cytosol"/>
    <property type="evidence" value="ECO:0007669"/>
    <property type="project" value="GOC"/>
</dbReference>
<dbReference type="GO" id="GO:0043023">
    <property type="term" value="F:ribosomal large subunit binding"/>
    <property type="evidence" value="ECO:0007669"/>
    <property type="project" value="TreeGrafter"/>
</dbReference>
<dbReference type="GO" id="GO:0002184">
    <property type="term" value="P:cytoplasmic translational termination"/>
    <property type="evidence" value="ECO:0007669"/>
    <property type="project" value="TreeGrafter"/>
</dbReference>
<dbReference type="CDD" id="cd00520">
    <property type="entry name" value="RRF"/>
    <property type="match status" value="1"/>
</dbReference>
<dbReference type="FunFam" id="1.10.132.20:FF:000001">
    <property type="entry name" value="Ribosome-recycling factor"/>
    <property type="match status" value="1"/>
</dbReference>
<dbReference type="FunFam" id="3.30.1360.40:FF:000001">
    <property type="entry name" value="Ribosome-recycling factor"/>
    <property type="match status" value="1"/>
</dbReference>
<dbReference type="Gene3D" id="3.30.1360.40">
    <property type="match status" value="1"/>
</dbReference>
<dbReference type="Gene3D" id="1.10.132.20">
    <property type="entry name" value="Ribosome-recycling factor"/>
    <property type="match status" value="1"/>
</dbReference>
<dbReference type="HAMAP" id="MF_00040">
    <property type="entry name" value="RRF"/>
    <property type="match status" value="1"/>
</dbReference>
<dbReference type="InterPro" id="IPR002661">
    <property type="entry name" value="Ribosome_recyc_fac"/>
</dbReference>
<dbReference type="InterPro" id="IPR023584">
    <property type="entry name" value="Ribosome_recyc_fac_dom"/>
</dbReference>
<dbReference type="InterPro" id="IPR036191">
    <property type="entry name" value="RRF_sf"/>
</dbReference>
<dbReference type="NCBIfam" id="TIGR00496">
    <property type="entry name" value="frr"/>
    <property type="match status" value="1"/>
</dbReference>
<dbReference type="PANTHER" id="PTHR20982:SF3">
    <property type="entry name" value="MITOCHONDRIAL RIBOSOME RECYCLING FACTOR PSEUDO 1"/>
    <property type="match status" value="1"/>
</dbReference>
<dbReference type="PANTHER" id="PTHR20982">
    <property type="entry name" value="RIBOSOME RECYCLING FACTOR"/>
    <property type="match status" value="1"/>
</dbReference>
<dbReference type="Pfam" id="PF01765">
    <property type="entry name" value="RRF"/>
    <property type="match status" value="1"/>
</dbReference>
<dbReference type="SUPFAM" id="SSF55194">
    <property type="entry name" value="Ribosome recycling factor, RRF"/>
    <property type="match status" value="1"/>
</dbReference>
<gene>
    <name evidence="1" type="primary">frr</name>
    <name type="ordered locus">Bxeno_A2732</name>
    <name type="ORF">Bxe_A1685</name>
</gene>
<protein>
    <recommendedName>
        <fullName evidence="1">Ribosome-recycling factor</fullName>
        <shortName evidence="1">RRF</shortName>
    </recommendedName>
    <alternativeName>
        <fullName evidence="1">Ribosome-releasing factor</fullName>
    </alternativeName>
</protein>
<accession>Q13XB9</accession>
<comment type="function">
    <text evidence="1">Responsible for the release of ribosomes from messenger RNA at the termination of protein biosynthesis. May increase the efficiency of translation by recycling ribosomes from one round of translation to another.</text>
</comment>
<comment type="subcellular location">
    <subcellularLocation>
        <location evidence="1">Cytoplasm</location>
    </subcellularLocation>
</comment>
<comment type="similarity">
    <text evidence="1">Belongs to the RRF family.</text>
</comment>
<name>RRF_PARXL</name>
<organism>
    <name type="scientific">Paraburkholderia xenovorans (strain LB400)</name>
    <dbReference type="NCBI Taxonomy" id="266265"/>
    <lineage>
        <taxon>Bacteria</taxon>
        <taxon>Pseudomonadati</taxon>
        <taxon>Pseudomonadota</taxon>
        <taxon>Betaproteobacteria</taxon>
        <taxon>Burkholderiales</taxon>
        <taxon>Burkholderiaceae</taxon>
        <taxon>Paraburkholderia</taxon>
    </lineage>
</organism>
<reference key="1">
    <citation type="journal article" date="2006" name="Proc. Natl. Acad. Sci. U.S.A.">
        <title>Burkholderia xenovorans LB400 harbors a multi-replicon, 9.73-Mbp genome shaped for versatility.</title>
        <authorList>
            <person name="Chain P.S.G."/>
            <person name="Denef V.J."/>
            <person name="Konstantinidis K.T."/>
            <person name="Vergez L.M."/>
            <person name="Agullo L."/>
            <person name="Reyes V.L."/>
            <person name="Hauser L."/>
            <person name="Cordova M."/>
            <person name="Gomez L."/>
            <person name="Gonzalez M."/>
            <person name="Land M."/>
            <person name="Lao V."/>
            <person name="Larimer F."/>
            <person name="LiPuma J.J."/>
            <person name="Mahenthiralingam E."/>
            <person name="Malfatti S.A."/>
            <person name="Marx C.J."/>
            <person name="Parnell J.J."/>
            <person name="Ramette A."/>
            <person name="Richardson P."/>
            <person name="Seeger M."/>
            <person name="Smith D."/>
            <person name="Spilker T."/>
            <person name="Sul W.J."/>
            <person name="Tsoi T.V."/>
            <person name="Ulrich L.E."/>
            <person name="Zhulin I.B."/>
            <person name="Tiedje J.M."/>
        </authorList>
    </citation>
    <scope>NUCLEOTIDE SEQUENCE [LARGE SCALE GENOMIC DNA]</scope>
    <source>
        <strain>LB400</strain>
    </source>
</reference>
<sequence>MSVADIRKGAEQKMQRSIDAFKNDLSKIRTGRAHTGLLDHIQCDYYGSPVPISQVANLTLIDARTIGVQPWEKKMVPVVEKAIRESDLGLNPATQGDVIRVPMPALTEERRRELTKVVKSEAETAKVAVRNLRRDANEQLKKLVKDKEISEDDERRAGDDVQKLTDRFVAEIDKLVVTKEAEIMTV</sequence>
<evidence type="ECO:0000255" key="1">
    <source>
        <dbReference type="HAMAP-Rule" id="MF_00040"/>
    </source>
</evidence>
<keyword id="KW-0963">Cytoplasm</keyword>
<keyword id="KW-0648">Protein biosynthesis</keyword>
<keyword id="KW-1185">Reference proteome</keyword>
<proteinExistence type="inferred from homology"/>